<organism>
    <name type="scientific">Escherichia coli (strain ATCC 8739 / DSM 1576 / NBRC 3972 / NCIMB 8545 / WDCM 00012 / Crooks)</name>
    <dbReference type="NCBI Taxonomy" id="481805"/>
    <lineage>
        <taxon>Bacteria</taxon>
        <taxon>Pseudomonadati</taxon>
        <taxon>Pseudomonadota</taxon>
        <taxon>Gammaproteobacteria</taxon>
        <taxon>Enterobacterales</taxon>
        <taxon>Enterobacteriaceae</taxon>
        <taxon>Escherichia</taxon>
    </lineage>
</organism>
<gene>
    <name evidence="1" type="primary">cysC</name>
    <name type="ordered locus">EcolC_0962</name>
</gene>
<proteinExistence type="inferred from homology"/>
<accession>B1IUS9</accession>
<protein>
    <recommendedName>
        <fullName evidence="1">Adenylyl-sulfate kinase</fullName>
        <ecNumber evidence="1">2.7.1.25</ecNumber>
    </recommendedName>
    <alternativeName>
        <fullName evidence="1">APS kinase</fullName>
    </alternativeName>
    <alternativeName>
        <fullName evidence="1">ATP adenosine-5'-phosphosulfate 3'-phosphotransferase</fullName>
    </alternativeName>
    <alternativeName>
        <fullName evidence="1">Adenosine-5'-phosphosulfate kinase</fullName>
    </alternativeName>
</protein>
<dbReference type="EC" id="2.7.1.25" evidence="1"/>
<dbReference type="EMBL" id="CP000946">
    <property type="protein sequence ID" value="ACA76631.1"/>
    <property type="molecule type" value="Genomic_DNA"/>
</dbReference>
<dbReference type="RefSeq" id="WP_001173676.1">
    <property type="nucleotide sequence ID" value="NZ_MTFT01000049.1"/>
</dbReference>
<dbReference type="SMR" id="B1IUS9"/>
<dbReference type="KEGG" id="ecl:EcolC_0962"/>
<dbReference type="HOGENOM" id="CLU_046932_1_0_6"/>
<dbReference type="UniPathway" id="UPA00140">
    <property type="reaction ID" value="UER00205"/>
</dbReference>
<dbReference type="GO" id="GO:0004020">
    <property type="term" value="F:adenylylsulfate kinase activity"/>
    <property type="evidence" value="ECO:0007669"/>
    <property type="project" value="UniProtKB-UniRule"/>
</dbReference>
<dbReference type="GO" id="GO:0005524">
    <property type="term" value="F:ATP binding"/>
    <property type="evidence" value="ECO:0007669"/>
    <property type="project" value="UniProtKB-UniRule"/>
</dbReference>
<dbReference type="GO" id="GO:0070814">
    <property type="term" value="P:hydrogen sulfide biosynthetic process"/>
    <property type="evidence" value="ECO:0007669"/>
    <property type="project" value="UniProtKB-UniRule"/>
</dbReference>
<dbReference type="GO" id="GO:0000103">
    <property type="term" value="P:sulfate assimilation"/>
    <property type="evidence" value="ECO:0007669"/>
    <property type="project" value="UniProtKB-UniRule"/>
</dbReference>
<dbReference type="CDD" id="cd02027">
    <property type="entry name" value="APSK"/>
    <property type="match status" value="1"/>
</dbReference>
<dbReference type="FunFam" id="3.40.50.300:FF:000212">
    <property type="entry name" value="Adenylyl-sulfate kinase"/>
    <property type="match status" value="1"/>
</dbReference>
<dbReference type="Gene3D" id="3.40.50.300">
    <property type="entry name" value="P-loop containing nucleotide triphosphate hydrolases"/>
    <property type="match status" value="1"/>
</dbReference>
<dbReference type="HAMAP" id="MF_00065">
    <property type="entry name" value="Adenylyl_sulf_kinase"/>
    <property type="match status" value="1"/>
</dbReference>
<dbReference type="InterPro" id="IPR002891">
    <property type="entry name" value="APS_kinase"/>
</dbReference>
<dbReference type="InterPro" id="IPR027417">
    <property type="entry name" value="P-loop_NTPase"/>
</dbReference>
<dbReference type="NCBIfam" id="TIGR00455">
    <property type="entry name" value="apsK"/>
    <property type="match status" value="1"/>
</dbReference>
<dbReference type="NCBIfam" id="NF003013">
    <property type="entry name" value="PRK03846.1"/>
    <property type="match status" value="1"/>
</dbReference>
<dbReference type="PANTHER" id="PTHR11055:SF63">
    <property type="entry name" value="ADENYLYL-SULFATE KINASE 1, CHLOROPLASTIC"/>
    <property type="match status" value="1"/>
</dbReference>
<dbReference type="PANTHER" id="PTHR11055">
    <property type="entry name" value="BIFUNCTIONAL 3'-PHOSPHOADENOSINE 5'-PHOSPHOSULFATE SYNTHASE"/>
    <property type="match status" value="1"/>
</dbReference>
<dbReference type="Pfam" id="PF01583">
    <property type="entry name" value="APS_kinase"/>
    <property type="match status" value="1"/>
</dbReference>
<dbReference type="SUPFAM" id="SSF52540">
    <property type="entry name" value="P-loop containing nucleoside triphosphate hydrolases"/>
    <property type="match status" value="1"/>
</dbReference>
<name>CYSC_ECOLC</name>
<evidence type="ECO:0000255" key="1">
    <source>
        <dbReference type="HAMAP-Rule" id="MF_00065"/>
    </source>
</evidence>
<comment type="function">
    <text evidence="1">Catalyzes the synthesis of activated sulfate.</text>
</comment>
<comment type="catalytic activity">
    <reaction evidence="1">
        <text>adenosine 5'-phosphosulfate + ATP = 3'-phosphoadenylyl sulfate + ADP + H(+)</text>
        <dbReference type="Rhea" id="RHEA:24152"/>
        <dbReference type="ChEBI" id="CHEBI:15378"/>
        <dbReference type="ChEBI" id="CHEBI:30616"/>
        <dbReference type="ChEBI" id="CHEBI:58243"/>
        <dbReference type="ChEBI" id="CHEBI:58339"/>
        <dbReference type="ChEBI" id="CHEBI:456216"/>
        <dbReference type="EC" id="2.7.1.25"/>
    </reaction>
</comment>
<comment type="pathway">
    <text evidence="1">Sulfur metabolism; hydrogen sulfide biosynthesis; sulfite from sulfate: step 2/3.</text>
</comment>
<comment type="similarity">
    <text evidence="1">Belongs to the APS kinase family.</text>
</comment>
<keyword id="KW-0067">ATP-binding</keyword>
<keyword id="KW-0418">Kinase</keyword>
<keyword id="KW-0547">Nucleotide-binding</keyword>
<keyword id="KW-0597">Phosphoprotein</keyword>
<keyword id="KW-0808">Transferase</keyword>
<reference key="1">
    <citation type="submission" date="2008-02" db="EMBL/GenBank/DDBJ databases">
        <title>Complete sequence of Escherichia coli C str. ATCC 8739.</title>
        <authorList>
            <person name="Copeland A."/>
            <person name="Lucas S."/>
            <person name="Lapidus A."/>
            <person name="Glavina del Rio T."/>
            <person name="Dalin E."/>
            <person name="Tice H."/>
            <person name="Bruce D."/>
            <person name="Goodwin L."/>
            <person name="Pitluck S."/>
            <person name="Kiss H."/>
            <person name="Brettin T."/>
            <person name="Detter J.C."/>
            <person name="Han C."/>
            <person name="Kuske C.R."/>
            <person name="Schmutz J."/>
            <person name="Larimer F."/>
            <person name="Land M."/>
            <person name="Hauser L."/>
            <person name="Kyrpides N."/>
            <person name="Mikhailova N."/>
            <person name="Ingram L."/>
            <person name="Richardson P."/>
        </authorList>
    </citation>
    <scope>NUCLEOTIDE SEQUENCE [LARGE SCALE GENOMIC DNA]</scope>
    <source>
        <strain>ATCC 8739 / DSM 1576 / NBRC 3972 / NCIMB 8545 / WDCM 00012 / Crooks</strain>
    </source>
</reference>
<sequence length="201" mass="22370">MALHDENVVWHSHPVTVQQRELHHGHRGVVLWFTGLSGSGKSTVAGALEEALHKLGVSTYLLDGDNVRHGLCSDLGFSDADRKENIRRVGEVANLMVEAGLVVLTAFISPHRAERQMVRERVGEGRFIEVFVDTPLAICEARDPKGLYKKARAGELRYFTGIDSVYEAPESAEIHLNGEQLVTNLVQQLLDLLRQNDIIRS</sequence>
<feature type="chain" id="PRO_1000075085" description="Adenylyl-sulfate kinase">
    <location>
        <begin position="1"/>
        <end position="201"/>
    </location>
</feature>
<feature type="active site" description="Phosphoserine intermediate" evidence="1">
    <location>
        <position position="109"/>
    </location>
</feature>
<feature type="binding site" evidence="1">
    <location>
        <begin position="35"/>
        <end position="42"/>
    </location>
    <ligand>
        <name>ATP</name>
        <dbReference type="ChEBI" id="CHEBI:30616"/>
    </ligand>
</feature>